<accession>Q3KST1</accession>
<organism>
    <name type="scientific">Epstein-Barr virus (strain GD1)</name>
    <name type="common">HHV-4</name>
    <name type="synonym">Human gammaherpesvirus 4</name>
    <dbReference type="NCBI Taxonomy" id="10376"/>
    <lineage>
        <taxon>Viruses</taxon>
        <taxon>Duplodnaviria</taxon>
        <taxon>Heunggongvirae</taxon>
        <taxon>Peploviricota</taxon>
        <taxon>Herviviricetes</taxon>
        <taxon>Herpesvirales</taxon>
        <taxon>Orthoherpesviridae</taxon>
        <taxon>Gammaherpesvirinae</taxon>
        <taxon>Lymphocryptovirus</taxon>
        <taxon>Lymphocryptovirus humangamma4</taxon>
    </lineage>
</organism>
<dbReference type="EMBL" id="AY961628">
    <property type="protein sequence ID" value="AAY41119.1"/>
    <property type="molecule type" value="Genomic_DNA"/>
</dbReference>
<dbReference type="IntAct" id="Q3KST1">
    <property type="interactions" value="2"/>
</dbReference>
<dbReference type="Proteomes" id="UP000007641">
    <property type="component" value="Genome"/>
</dbReference>
<dbReference type="GO" id="GO:0042025">
    <property type="term" value="C:host cell nucleus"/>
    <property type="evidence" value="ECO:0007669"/>
    <property type="project" value="UniProtKB-SubCell"/>
</dbReference>
<dbReference type="GO" id="GO:0016032">
    <property type="term" value="P:viral process"/>
    <property type="evidence" value="ECO:0007669"/>
    <property type="project" value="InterPro"/>
</dbReference>
<dbReference type="InterPro" id="IPR007706">
    <property type="entry name" value="EBNA-3/4/6"/>
</dbReference>
<dbReference type="Pfam" id="PF05009">
    <property type="entry name" value="EBV-NA3"/>
    <property type="match status" value="1"/>
</dbReference>
<feature type="chain" id="PRO_0000375937" description="Epstein-Barr nuclear antigen 4">
    <location>
        <begin position="1"/>
        <end position="938"/>
    </location>
</feature>
<feature type="region of interest" description="Disordered" evidence="2">
    <location>
        <begin position="1"/>
        <end position="92"/>
    </location>
</feature>
<feature type="region of interest" description="Disordered" evidence="2">
    <location>
        <begin position="360"/>
        <end position="389"/>
    </location>
</feature>
<feature type="region of interest" description="Disordered" evidence="2">
    <location>
        <begin position="431"/>
        <end position="471"/>
    </location>
</feature>
<feature type="region of interest" description="Disordered" evidence="2">
    <location>
        <begin position="560"/>
        <end position="626"/>
    </location>
</feature>
<feature type="region of interest" description="Disordered" evidence="2">
    <location>
        <begin position="694"/>
        <end position="767"/>
    </location>
</feature>
<feature type="region of interest" description="Disordered" evidence="2">
    <location>
        <begin position="834"/>
        <end position="870"/>
    </location>
</feature>
<feature type="region of interest" description="Disordered" evidence="2">
    <location>
        <begin position="919"/>
        <end position="938"/>
    </location>
</feature>
<feature type="compositionally biased region" description="Basic and acidic residues" evidence="2">
    <location>
        <begin position="69"/>
        <end position="92"/>
    </location>
</feature>
<feature type="compositionally biased region" description="Acidic residues" evidence="2">
    <location>
        <begin position="360"/>
        <end position="374"/>
    </location>
</feature>
<feature type="compositionally biased region" description="Basic and acidic residues" evidence="2">
    <location>
        <begin position="431"/>
        <end position="440"/>
    </location>
</feature>
<feature type="compositionally biased region" description="Low complexity" evidence="2">
    <location>
        <begin position="575"/>
        <end position="594"/>
    </location>
</feature>
<feature type="compositionally biased region" description="Pro residues" evidence="2">
    <location>
        <begin position="698"/>
        <end position="713"/>
    </location>
</feature>
<feature type="compositionally biased region" description="Pro residues" evidence="2">
    <location>
        <begin position="722"/>
        <end position="750"/>
    </location>
</feature>
<feature type="compositionally biased region" description="Polar residues" evidence="2">
    <location>
        <begin position="840"/>
        <end position="849"/>
    </location>
</feature>
<feature type="compositionally biased region" description="Low complexity" evidence="2">
    <location>
        <begin position="927"/>
        <end position="938"/>
    </location>
</feature>
<gene>
    <name type="primary">EBNA4</name>
    <name type="ORF">BERF2A-BERF2B</name>
</gene>
<reference key="1">
    <citation type="journal article" date="2005" name="J. Virol.">
        <title>Genomic sequence analysis of Epstein-Barr virus strain GD1 from a nasopharyngeal carcinoma patient.</title>
        <authorList>
            <person name="Zeng M.-S."/>
            <person name="Li D.-J."/>
            <person name="Liu Q.-L."/>
            <person name="Song L.-B."/>
            <person name="Li M.-Z."/>
            <person name="Zhang R.-H."/>
            <person name="Yu X.-J."/>
            <person name="Wang H.-M."/>
            <person name="Ernberg I."/>
            <person name="Zeng Y.-X."/>
        </authorList>
    </citation>
    <scope>NUCLEOTIDE SEQUENCE [LARGE SCALE GENOMIC DNA]</scope>
</reference>
<organismHost>
    <name type="scientific">Homo sapiens</name>
    <name type="common">Human</name>
    <dbReference type="NCBI Taxonomy" id="9606"/>
</organismHost>
<keyword id="KW-1048">Host nucleus</keyword>
<keyword id="KW-0945">Host-virus interaction</keyword>
<keyword id="KW-0804">Transcription</keyword>
<keyword id="KW-0805">Transcription regulation</keyword>
<comment type="function">
    <text evidence="1">May be involved in transcriptional regulation of both viral and cellular genes by interacting with the host DNA-binding protein RBPJ.</text>
</comment>
<comment type="subunit">
    <text evidence="1">Interacts (via N-terminus) with host RBPJ.</text>
</comment>
<comment type="subcellular location">
    <subcellularLocation>
        <location>Host nucleus</location>
    </subcellularLocation>
</comment>
<comment type="similarity">
    <text evidence="3">Belongs to the herpesviridae EBNA-4 family.</text>
</comment>
<evidence type="ECO:0000250" key="1"/>
<evidence type="ECO:0000256" key="2">
    <source>
        <dbReference type="SAM" id="MobiDB-lite"/>
    </source>
</evidence>
<evidence type="ECO:0000305" key="3"/>
<proteinExistence type="inferred from homology"/>
<sequence>MKKAWLSRARQADAGGASGSEDPPDYGDQGNVQQVGSGPISPEIGPFELSAASEDDPQSGPVEENLDAAAREEQEPHEQEHNGGDDPLDVHTRQPRFVDVNPTQAPVIQLVHAVYDSMLQSDLRPLGSLFLEQNLNIEEFIWMCMTVRHRCQAIRKKPLPIVKQRRWKLLSSCRSWRMGYRTHNLKVNSFESGGDNVHPVLVTATLGCDEGTRHATTYSAGIVQIPRISDQNQKIETAFLMARRARSLSAERYTLFFDLVSSGNTLYAIWIGLGTKNRVSFIEFVGWLCKKDHTHIREWFRQCTGRPKAAKPWLRAHPVAIPYDDPLTNEEIDLAYARGQAMNIEAPRLPDDPIIVEDDDESEEIEAESDEEEDKSGMESLKNIPQTLPYNPTVYGRPAVFDRKSDAKSTKKCRAILTDFSVIKAIEEEHRKKKAARTEQPRATPESQAPTVVLQRPPTQHEPGPAGPLSVQARLEPWQPLPGPQVTTVLLHEESMQGVQVHGSMLDLLEKDDEVMEQRVMATLLPPVPQQPQAGRRGPCVYTGDLGIESDELASTEPVHDQLLPAPGPDPLEIQPLTSPTTSQLSSSAPSCAQTPWPVVQPSQTPDDPMKQSRPPETAAPRQWPMPLRPIPMRPLRMQPIPFNHPVGPTPHQTPQVELTPYKPTWAQMGHIPYQPTPTGPATMLLRQWAPATMQTPPRAPTPMSPPEVPPVPRQRSRGAPTPTPPPQVPPVPRQRPRGAPTPTPPPQVLPTPMQLAPRAPAGQQGPTKQILRQLLTGGVKKGRPSLKLQAALERQAAAGWQPSTGSGTSAKIVRAPVFYPPVLQPIQVMGQGGSPTAMAASTVTQEPTEYTRERRGVGPMPPTDIPPSKRAKIEAYTEPEMPHGGASHSPVVILENVGQGQQQTLECGGTAKQERDVLGLGDIAVSSPSSSETSNDE</sequence>
<name>EBNA4_EBVG</name>
<protein>
    <recommendedName>
        <fullName>Epstein-Barr nuclear antigen 4</fullName>
        <shortName>EBNA-4</shortName>
        <shortName>EBV nuclear antigen 4</shortName>
    </recommendedName>
    <alternativeName>
        <fullName>Epstein-Barr nuclear antigen 3B</fullName>
        <shortName>EBNA-3B</shortName>
        <shortName>EBV nuclear antigen 3B</shortName>
    </alternativeName>
</protein>